<reference key="1">
    <citation type="journal article" date="2008" name="PLoS Genet.">
        <title>Complete genome sequence of the N2-fixing broad host range endophyte Klebsiella pneumoniae 342 and virulence predictions verified in mice.</title>
        <authorList>
            <person name="Fouts D.E."/>
            <person name="Tyler H.L."/>
            <person name="DeBoy R.T."/>
            <person name="Daugherty S."/>
            <person name="Ren Q."/>
            <person name="Badger J.H."/>
            <person name="Durkin A.S."/>
            <person name="Huot H."/>
            <person name="Shrivastava S."/>
            <person name="Kothari S."/>
            <person name="Dodson R.J."/>
            <person name="Mohamoud Y."/>
            <person name="Khouri H."/>
            <person name="Roesch L.F.W."/>
            <person name="Krogfelt K.A."/>
            <person name="Struve C."/>
            <person name="Triplett E.W."/>
            <person name="Methe B.A."/>
        </authorList>
    </citation>
    <scope>NUCLEOTIDE SEQUENCE [LARGE SCALE GENOMIC DNA]</scope>
    <source>
        <strain>342</strain>
    </source>
</reference>
<sequence>MKTSIFKSLYVQVLTAIAIGILLGHFYPELGAQMKPFGDAFVKLIKMVIAPVIFCTVVTGIAGMESMKAVGRTGAVALLYFEVVSTIALIIGLIIVNVVQPGAGMNVDPSTLDAKAVAVYAEQAKDQGVVAFLLDVIPGSVIGAFASGNILQVLLFAVLFGFALHRLGSKGQLIFNVIESFSQVIFGIINMIMRLAPIGAFGAMAFTIGKYGVGTLVQLGQLIICFYITCILFVVVVLGSIARATGFSIFKFIRYIREELLIVLGTSSSESALPRMLDKMEKLGCRKSVVGLVIPTGYSFNLDGTSIYLTMAAVFIAQATNSHMDIFHQITLLVVLLLSSKGAAGVTGSGFIVLAATISAVGHLPVAGLALILGIDRFMSEARALTNLVGNGVATVVVAKWVKELDAKQMDDVLNNRVPANKSHELSS</sequence>
<gene>
    <name evidence="1" type="primary">dctA</name>
    <name type="ordered locus">KPK_0228</name>
</gene>
<proteinExistence type="inferred from homology"/>
<organism>
    <name type="scientific">Klebsiella pneumoniae (strain 342)</name>
    <dbReference type="NCBI Taxonomy" id="507522"/>
    <lineage>
        <taxon>Bacteria</taxon>
        <taxon>Pseudomonadati</taxon>
        <taxon>Pseudomonadota</taxon>
        <taxon>Gammaproteobacteria</taxon>
        <taxon>Enterobacterales</taxon>
        <taxon>Enterobacteriaceae</taxon>
        <taxon>Klebsiella/Raoultella group</taxon>
        <taxon>Klebsiella</taxon>
        <taxon>Klebsiella pneumoniae complex</taxon>
    </lineage>
</organism>
<keyword id="KW-0997">Cell inner membrane</keyword>
<keyword id="KW-1003">Cell membrane</keyword>
<keyword id="KW-0472">Membrane</keyword>
<keyword id="KW-0769">Symport</keyword>
<keyword id="KW-0812">Transmembrane</keyword>
<keyword id="KW-1133">Transmembrane helix</keyword>
<keyword id="KW-0813">Transport</keyword>
<evidence type="ECO:0000255" key="1">
    <source>
        <dbReference type="HAMAP-Rule" id="MF_01300"/>
    </source>
</evidence>
<protein>
    <recommendedName>
        <fullName evidence="1">C4-dicarboxylate transport protein</fullName>
    </recommendedName>
</protein>
<name>DCTA_KLEP3</name>
<dbReference type="EMBL" id="CP000964">
    <property type="protein sequence ID" value="ACI07706.1"/>
    <property type="molecule type" value="Genomic_DNA"/>
</dbReference>
<dbReference type="SMR" id="B5XN31"/>
<dbReference type="KEGG" id="kpe:KPK_0228"/>
<dbReference type="HOGENOM" id="CLU_019375_7_0_6"/>
<dbReference type="Proteomes" id="UP000001734">
    <property type="component" value="Chromosome"/>
</dbReference>
<dbReference type="GO" id="GO:0005886">
    <property type="term" value="C:plasma membrane"/>
    <property type="evidence" value="ECO:0007669"/>
    <property type="project" value="UniProtKB-SubCell"/>
</dbReference>
<dbReference type="GO" id="GO:0015138">
    <property type="term" value="F:fumarate transmembrane transporter activity"/>
    <property type="evidence" value="ECO:0007669"/>
    <property type="project" value="TreeGrafter"/>
</dbReference>
<dbReference type="GO" id="GO:0015366">
    <property type="term" value="F:malate:proton symporter activity"/>
    <property type="evidence" value="ECO:0007669"/>
    <property type="project" value="TreeGrafter"/>
</dbReference>
<dbReference type="GO" id="GO:0015141">
    <property type="term" value="F:succinate transmembrane transporter activity"/>
    <property type="evidence" value="ECO:0007669"/>
    <property type="project" value="TreeGrafter"/>
</dbReference>
<dbReference type="GO" id="GO:0070778">
    <property type="term" value="P:L-aspartate transmembrane transport"/>
    <property type="evidence" value="ECO:0007669"/>
    <property type="project" value="TreeGrafter"/>
</dbReference>
<dbReference type="FunFam" id="1.10.3860.10:FF:000001">
    <property type="entry name" value="C4-dicarboxylate transport protein"/>
    <property type="match status" value="1"/>
</dbReference>
<dbReference type="Gene3D" id="1.10.3860.10">
    <property type="entry name" value="Sodium:dicarboxylate symporter"/>
    <property type="match status" value="1"/>
</dbReference>
<dbReference type="HAMAP" id="MF_01300">
    <property type="entry name" value="C4_dicarb_transport"/>
    <property type="match status" value="1"/>
</dbReference>
<dbReference type="InterPro" id="IPR023954">
    <property type="entry name" value="C4_dicarb_transport"/>
</dbReference>
<dbReference type="InterPro" id="IPR001991">
    <property type="entry name" value="Na-dicarboxylate_symporter"/>
</dbReference>
<dbReference type="InterPro" id="IPR018107">
    <property type="entry name" value="Na-dicarboxylate_symporter_CS"/>
</dbReference>
<dbReference type="InterPro" id="IPR036458">
    <property type="entry name" value="Na:dicarbo_symporter_sf"/>
</dbReference>
<dbReference type="NCBIfam" id="NF002461">
    <property type="entry name" value="PRK01663.1"/>
    <property type="match status" value="1"/>
</dbReference>
<dbReference type="NCBIfam" id="NF009587">
    <property type="entry name" value="PRK13027.1"/>
    <property type="match status" value="1"/>
</dbReference>
<dbReference type="PANTHER" id="PTHR42865:SF1">
    <property type="entry name" value="AEROBIC C4-DICARBOXYLATE TRANSPORT PROTEIN"/>
    <property type="match status" value="1"/>
</dbReference>
<dbReference type="PANTHER" id="PTHR42865">
    <property type="entry name" value="PROTON/GLUTAMATE-ASPARTATE SYMPORTER"/>
    <property type="match status" value="1"/>
</dbReference>
<dbReference type="Pfam" id="PF00375">
    <property type="entry name" value="SDF"/>
    <property type="match status" value="1"/>
</dbReference>
<dbReference type="PRINTS" id="PR00173">
    <property type="entry name" value="EDTRNSPORT"/>
</dbReference>
<dbReference type="SUPFAM" id="SSF118215">
    <property type="entry name" value="Proton glutamate symport protein"/>
    <property type="match status" value="1"/>
</dbReference>
<dbReference type="PROSITE" id="PS00713">
    <property type="entry name" value="NA_DICARBOXYL_SYMP_1"/>
    <property type="match status" value="1"/>
</dbReference>
<dbReference type="PROSITE" id="PS00714">
    <property type="entry name" value="NA_DICARBOXYL_SYMP_2"/>
    <property type="match status" value="1"/>
</dbReference>
<comment type="function">
    <text evidence="1">Responsible for the transport of dicarboxylates such as succinate, fumarate, and malate from the periplasm across the membrane.</text>
</comment>
<comment type="subcellular location">
    <subcellularLocation>
        <location evidence="1">Cell inner membrane</location>
        <topology evidence="1">Multi-pass membrane protein</topology>
    </subcellularLocation>
</comment>
<comment type="similarity">
    <text evidence="1">Belongs to the dicarboxylate/amino acid:cation symporter (DAACS) (TC 2.A.23) family.</text>
</comment>
<accession>B5XN31</accession>
<feature type="chain" id="PRO_1000140459" description="C4-dicarboxylate transport protein">
    <location>
        <begin position="1"/>
        <end position="428"/>
    </location>
</feature>
<feature type="transmembrane region" description="Helical" evidence="1">
    <location>
        <begin position="8"/>
        <end position="28"/>
    </location>
</feature>
<feature type="transmembrane region" description="Helical" evidence="1">
    <location>
        <begin position="44"/>
        <end position="64"/>
    </location>
</feature>
<feature type="transmembrane region" description="Helical" evidence="1">
    <location>
        <begin position="76"/>
        <end position="96"/>
    </location>
</feature>
<feature type="transmembrane region" description="Helical" evidence="1">
    <location>
        <begin position="142"/>
        <end position="162"/>
    </location>
</feature>
<feature type="transmembrane region" description="Helical" evidence="1">
    <location>
        <begin position="184"/>
        <end position="204"/>
    </location>
</feature>
<feature type="transmembrane region" description="Helical" evidence="1">
    <location>
        <begin position="222"/>
        <end position="242"/>
    </location>
</feature>
<feature type="transmembrane region" description="Helical" evidence="1">
    <location>
        <begin position="289"/>
        <end position="309"/>
    </location>
</feature>
<feature type="transmembrane region" description="Helical" evidence="1">
    <location>
        <begin position="326"/>
        <end position="346"/>
    </location>
</feature>
<feature type="transmembrane region" description="Helical" evidence="1">
    <location>
        <begin position="352"/>
        <end position="372"/>
    </location>
</feature>